<keyword id="KW-0687">Ribonucleoprotein</keyword>
<keyword id="KW-0689">Ribosomal protein</keyword>
<keyword id="KW-0694">RNA-binding</keyword>
<keyword id="KW-0699">rRNA-binding</keyword>
<keyword id="KW-0820">tRNA-binding</keyword>
<reference key="1">
    <citation type="journal article" date="2006" name="PLoS Genet.">
        <title>Comparative genomics of emerging human ehrlichiosis agents.</title>
        <authorList>
            <person name="Dunning Hotopp J.C."/>
            <person name="Lin M."/>
            <person name="Madupu R."/>
            <person name="Crabtree J."/>
            <person name="Angiuoli S.V."/>
            <person name="Eisen J.A."/>
            <person name="Seshadri R."/>
            <person name="Ren Q."/>
            <person name="Wu M."/>
            <person name="Utterback T.R."/>
            <person name="Smith S."/>
            <person name="Lewis M."/>
            <person name="Khouri H."/>
            <person name="Zhang C."/>
            <person name="Niu H."/>
            <person name="Lin Q."/>
            <person name="Ohashi N."/>
            <person name="Zhi N."/>
            <person name="Nelson W.C."/>
            <person name="Brinkac L.M."/>
            <person name="Dodson R.J."/>
            <person name="Rosovitz M.J."/>
            <person name="Sundaram J.P."/>
            <person name="Daugherty S.C."/>
            <person name="Davidsen T."/>
            <person name="Durkin A.S."/>
            <person name="Gwinn M.L."/>
            <person name="Haft D.H."/>
            <person name="Selengut J.D."/>
            <person name="Sullivan S.A."/>
            <person name="Zafar N."/>
            <person name="Zhou L."/>
            <person name="Benahmed F."/>
            <person name="Forberger H."/>
            <person name="Halpin R."/>
            <person name="Mulligan S."/>
            <person name="Robinson J."/>
            <person name="White O."/>
            <person name="Rikihisa Y."/>
            <person name="Tettelin H."/>
        </authorList>
    </citation>
    <scope>NUCLEOTIDE SEQUENCE [LARGE SCALE GENOMIC DNA]</scope>
    <source>
        <strain>ATCC VR-367 / Miyayama</strain>
    </source>
</reference>
<organism>
    <name type="scientific">Neorickettsia sennetsu (strain ATCC VR-367 / Miyayama)</name>
    <name type="common">Ehrlichia sennetsu</name>
    <dbReference type="NCBI Taxonomy" id="222891"/>
    <lineage>
        <taxon>Bacteria</taxon>
        <taxon>Pseudomonadati</taxon>
        <taxon>Pseudomonadota</taxon>
        <taxon>Alphaproteobacteria</taxon>
        <taxon>Rickettsiales</taxon>
        <taxon>Anaplasmataceae</taxon>
        <taxon>Neorickettsia</taxon>
    </lineage>
</organism>
<comment type="function">
    <text evidence="1">One of the primary rRNA binding proteins, it binds directly to 16S rRNA where it nucleates assembly of the head domain of the 30S subunit. Is located at the subunit interface close to the decoding center, probably blocks exit of the E-site tRNA.</text>
</comment>
<comment type="subunit">
    <text evidence="1">Part of the 30S ribosomal subunit. Contacts proteins S9 and S11.</text>
</comment>
<comment type="similarity">
    <text evidence="1">Belongs to the universal ribosomal protein uS7 family.</text>
</comment>
<proteinExistence type="inferred from homology"/>
<accession>Q2GD81</accession>
<name>RS7_NEOSM</name>
<dbReference type="EMBL" id="CP000237">
    <property type="protein sequence ID" value="ABD46175.1"/>
    <property type="molecule type" value="Genomic_DNA"/>
</dbReference>
<dbReference type="RefSeq" id="WP_011452071.1">
    <property type="nucleotide sequence ID" value="NC_007798.1"/>
</dbReference>
<dbReference type="SMR" id="Q2GD81"/>
<dbReference type="STRING" id="222891.NSE_0688"/>
<dbReference type="KEGG" id="nse:NSE_0688"/>
<dbReference type="eggNOG" id="COG0049">
    <property type="taxonomic scope" value="Bacteria"/>
</dbReference>
<dbReference type="HOGENOM" id="CLU_072226_1_1_5"/>
<dbReference type="OrthoDB" id="9807653at2"/>
<dbReference type="Proteomes" id="UP000001942">
    <property type="component" value="Chromosome"/>
</dbReference>
<dbReference type="GO" id="GO:0015935">
    <property type="term" value="C:small ribosomal subunit"/>
    <property type="evidence" value="ECO:0007669"/>
    <property type="project" value="InterPro"/>
</dbReference>
<dbReference type="GO" id="GO:0019843">
    <property type="term" value="F:rRNA binding"/>
    <property type="evidence" value="ECO:0007669"/>
    <property type="project" value="UniProtKB-UniRule"/>
</dbReference>
<dbReference type="GO" id="GO:0003735">
    <property type="term" value="F:structural constituent of ribosome"/>
    <property type="evidence" value="ECO:0007669"/>
    <property type="project" value="InterPro"/>
</dbReference>
<dbReference type="GO" id="GO:0000049">
    <property type="term" value="F:tRNA binding"/>
    <property type="evidence" value="ECO:0007669"/>
    <property type="project" value="UniProtKB-UniRule"/>
</dbReference>
<dbReference type="GO" id="GO:0006412">
    <property type="term" value="P:translation"/>
    <property type="evidence" value="ECO:0007669"/>
    <property type="project" value="UniProtKB-UniRule"/>
</dbReference>
<dbReference type="CDD" id="cd14869">
    <property type="entry name" value="uS7_Bacteria"/>
    <property type="match status" value="1"/>
</dbReference>
<dbReference type="Gene3D" id="1.10.455.10">
    <property type="entry name" value="Ribosomal protein S7 domain"/>
    <property type="match status" value="1"/>
</dbReference>
<dbReference type="HAMAP" id="MF_00480_B">
    <property type="entry name" value="Ribosomal_uS7_B"/>
    <property type="match status" value="1"/>
</dbReference>
<dbReference type="InterPro" id="IPR000235">
    <property type="entry name" value="Ribosomal_uS7"/>
</dbReference>
<dbReference type="InterPro" id="IPR005717">
    <property type="entry name" value="Ribosomal_uS7_bac/org-type"/>
</dbReference>
<dbReference type="InterPro" id="IPR020606">
    <property type="entry name" value="Ribosomal_uS7_CS"/>
</dbReference>
<dbReference type="InterPro" id="IPR023798">
    <property type="entry name" value="Ribosomal_uS7_dom"/>
</dbReference>
<dbReference type="InterPro" id="IPR036823">
    <property type="entry name" value="Ribosomal_uS7_dom_sf"/>
</dbReference>
<dbReference type="NCBIfam" id="TIGR01029">
    <property type="entry name" value="rpsG_bact"/>
    <property type="match status" value="1"/>
</dbReference>
<dbReference type="PANTHER" id="PTHR11205">
    <property type="entry name" value="RIBOSOMAL PROTEIN S7"/>
    <property type="match status" value="1"/>
</dbReference>
<dbReference type="Pfam" id="PF00177">
    <property type="entry name" value="Ribosomal_S7"/>
    <property type="match status" value="1"/>
</dbReference>
<dbReference type="PIRSF" id="PIRSF002122">
    <property type="entry name" value="RPS7p_RPS7a_RPS5e_RPS7o"/>
    <property type="match status" value="1"/>
</dbReference>
<dbReference type="SUPFAM" id="SSF47973">
    <property type="entry name" value="Ribosomal protein S7"/>
    <property type="match status" value="1"/>
</dbReference>
<dbReference type="PROSITE" id="PS00052">
    <property type="entry name" value="RIBOSOMAL_S7"/>
    <property type="match status" value="1"/>
</dbReference>
<evidence type="ECO:0000255" key="1">
    <source>
        <dbReference type="HAMAP-Rule" id="MF_00480"/>
    </source>
</evidence>
<evidence type="ECO:0000305" key="2"/>
<feature type="chain" id="PRO_0000241763" description="Small ribosomal subunit protein uS7">
    <location>
        <begin position="1"/>
        <end position="175"/>
    </location>
</feature>
<sequence>MSRRNVAKKREVSADRKYNSKIVAKFINHVMKKGKRALAEKIVYGAMEKAEKQLGVPAMDVLTGVLANISPAVELRSFRAGGVNYRIPVPIKEERSRFIAFGWLLSEARKRKGMCSRDRIALELLEAHSGHGGAFRKFEENVKVAESGRAFSHFRFFNTGGARRSNPSNNIGGNR</sequence>
<protein>
    <recommendedName>
        <fullName evidence="1">Small ribosomal subunit protein uS7</fullName>
    </recommendedName>
    <alternativeName>
        <fullName evidence="2">30S ribosomal protein S7</fullName>
    </alternativeName>
</protein>
<gene>
    <name evidence="1" type="primary">rpsG</name>
    <name type="ordered locus">NSE_0688</name>
</gene>